<organism>
    <name type="scientific">Rattus norvegicus</name>
    <name type="common">Rat</name>
    <dbReference type="NCBI Taxonomy" id="10116"/>
    <lineage>
        <taxon>Eukaryota</taxon>
        <taxon>Metazoa</taxon>
        <taxon>Chordata</taxon>
        <taxon>Craniata</taxon>
        <taxon>Vertebrata</taxon>
        <taxon>Euteleostomi</taxon>
        <taxon>Mammalia</taxon>
        <taxon>Eutheria</taxon>
        <taxon>Euarchontoglires</taxon>
        <taxon>Glires</taxon>
        <taxon>Rodentia</taxon>
        <taxon>Myomorpha</taxon>
        <taxon>Muroidea</taxon>
        <taxon>Muridae</taxon>
        <taxon>Murinae</taxon>
        <taxon>Rattus</taxon>
    </lineage>
</organism>
<sequence length="474" mass="52345">MATSWGSILQDEKQLEELAQQAIDRALAEGVLLRSAKNPSSSDVVTYAPFTLFPSPVPSTLLEQAYAVQMDFNILVDAVSQNSAFLEQTLSSTIKKDEYTARLFDIYKQVLKEGIAQTVFLGLNRSDYMFQCSADGSKALKQIEINTISASFGGLASRTPAVHRHVLNVLNKTNEASKILSNNPSKGLALGIAKAWELYGSANAVVLLIAQEKERNIFDQRAIENELLDRKIHVIRRRFEDVSERGSLDQNRRLFMEDQEVAVVYFRDGYMPSQYNAQNWEARLLLERSCAAKCPDIATQLAGTKKVQQELSRVGLLEALLPGQPEAVARLRATFAGLYSLDMGEEGDQAVAEALAAPSHFVLKPQREGGGNNFYGEEMVHALEQLKDSEERASYILMEKIEPEPFRNCLLRPGSPAQVVQCISELGIFGVYVRQGTTLVMNKHVGHLLRTKAIEHADGGVAAGVAVLDNPYPV</sequence>
<evidence type="ECO:0000250" key="1"/>
<evidence type="ECO:0000250" key="2">
    <source>
        <dbReference type="UniProtKB" id="P48637"/>
    </source>
</evidence>
<evidence type="ECO:0000250" key="3">
    <source>
        <dbReference type="UniProtKB" id="P51855"/>
    </source>
</evidence>
<evidence type="ECO:0000269" key="4">
    <source>
    </source>
</evidence>
<evidence type="ECO:0000303" key="5">
    <source>
    </source>
</evidence>
<evidence type="ECO:0000305" key="6"/>
<evidence type="ECO:0000305" key="7">
    <source>
    </source>
</evidence>
<evidence type="ECO:0000312" key="8">
    <source>
        <dbReference type="RGD" id="2752"/>
    </source>
</evidence>
<accession>P46413</accession>
<comment type="function">
    <text evidence="3 4 5">Catalyzes the production of glutathione from gamma-glutamylcysteine and glycine in an ATP-dependent manner (PubMed:7862666). Glutathione (gamma-glutamylcysteinylglycine, GSH) is the most abundant intracellular thiol in living aerobic cells and is required for numerous processes including the protection of cells against oxidative damage, amino acid transport, the detoxification of foreign compounds, the maintenance of protein sulfhydryl groups in a reduced state and acts as a cofactor for a number of enzymes (PubMed:7862666). Participates in ophthalmate biosynthesis in hepatocytes (By similarity).</text>
</comment>
<comment type="catalytic activity">
    <reaction evidence="4">
        <text>gamma-L-glutamyl-L-cysteine + glycine + ATP = glutathione + ADP + phosphate + H(+)</text>
        <dbReference type="Rhea" id="RHEA:13557"/>
        <dbReference type="ChEBI" id="CHEBI:15378"/>
        <dbReference type="ChEBI" id="CHEBI:30616"/>
        <dbReference type="ChEBI" id="CHEBI:43474"/>
        <dbReference type="ChEBI" id="CHEBI:57305"/>
        <dbReference type="ChEBI" id="CHEBI:57925"/>
        <dbReference type="ChEBI" id="CHEBI:58173"/>
        <dbReference type="ChEBI" id="CHEBI:456216"/>
        <dbReference type="EC" id="6.3.2.3"/>
    </reaction>
    <physiologicalReaction direction="left-to-right" evidence="7">
        <dbReference type="Rhea" id="RHEA:13558"/>
    </physiologicalReaction>
</comment>
<comment type="catalytic activity">
    <reaction evidence="3">
        <text>gamma-L-glutamyl-(2S)-2-aminobutanoate + glycine + ATP = ophthalmate + ADP + phosphate + H(+)</text>
        <dbReference type="Rhea" id="RHEA:72075"/>
        <dbReference type="ChEBI" id="CHEBI:15378"/>
        <dbReference type="ChEBI" id="CHEBI:30616"/>
        <dbReference type="ChEBI" id="CHEBI:43474"/>
        <dbReference type="ChEBI" id="CHEBI:57305"/>
        <dbReference type="ChEBI" id="CHEBI:189406"/>
        <dbReference type="ChEBI" id="CHEBI:189750"/>
        <dbReference type="ChEBI" id="CHEBI:456216"/>
    </reaction>
    <physiologicalReaction direction="left-to-right" evidence="3">
        <dbReference type="Rhea" id="RHEA:72076"/>
    </physiologicalReaction>
</comment>
<comment type="cofactor">
    <cofactor evidence="2">
        <name>Mg(2+)</name>
        <dbReference type="ChEBI" id="CHEBI:18420"/>
    </cofactor>
    <text evidence="2">Binds 1 Mg(2+) ion per subunit.</text>
</comment>
<comment type="pathway">
    <text evidence="7">Sulfur metabolism; glutathione biosynthesis; glutathione from L-cysteine and L-glutamate: step 2/2.</text>
</comment>
<comment type="subunit">
    <text evidence="2">Homodimer.</text>
</comment>
<comment type="similarity">
    <text evidence="6">Belongs to the eukaryotic GSH synthase family.</text>
</comment>
<protein>
    <recommendedName>
        <fullName evidence="5">Glutathione synthetase</fullName>
        <shortName>GSH synthetase</shortName>
        <shortName>GSH-S</shortName>
        <ecNumber evidence="4">6.3.2.3</ecNumber>
    </recommendedName>
    <alternativeName>
        <fullName>Glutathione synthase</fullName>
    </alternativeName>
</protein>
<proteinExistence type="evidence at protein level"/>
<keyword id="KW-0007">Acetylation</keyword>
<keyword id="KW-0067">ATP-binding</keyword>
<keyword id="KW-0903">Direct protein sequencing</keyword>
<keyword id="KW-0317">Glutathione biosynthesis</keyword>
<keyword id="KW-0436">Ligase</keyword>
<keyword id="KW-0460">Magnesium</keyword>
<keyword id="KW-0479">Metal-binding</keyword>
<keyword id="KW-0547">Nucleotide-binding</keyword>
<keyword id="KW-0597">Phosphoprotein</keyword>
<keyword id="KW-1185">Reference proteome</keyword>
<reference key="1">
    <citation type="journal article" date="1995" name="Proc. Natl. Acad. Sci. U.S.A.">
        <title>Amino acid sequence of rat kidney glutathione synthetase.</title>
        <authorList>
            <person name="Huang C.-S."/>
            <person name="He W."/>
            <person name="Meister A."/>
            <person name="Anderson M.E."/>
        </authorList>
    </citation>
    <scope>NUCLEOTIDE SEQUENCE [MRNA]</scope>
    <scope>PARTIAL PROTEIN SEQUENCE</scope>
    <scope>FUNCTION</scope>
    <scope>CATALYTIC ACTIVITY</scope>
    <scope>PATHWAY</scope>
    <source>
        <tissue>Kidney</tissue>
    </source>
</reference>
<reference key="2">
    <citation type="journal article" date="2004" name="Genome Res.">
        <title>The status, quality, and expansion of the NIH full-length cDNA project: the Mammalian Gene Collection (MGC).</title>
        <authorList>
            <consortium name="The MGC Project Team"/>
        </authorList>
    </citation>
    <scope>NUCLEOTIDE SEQUENCE [LARGE SCALE MRNA]</scope>
    <source>
        <tissue>Kidney</tissue>
    </source>
</reference>
<gene>
    <name evidence="8" type="primary">Gss</name>
</gene>
<name>GSHB_RAT</name>
<dbReference type="EC" id="6.3.2.3" evidence="4"/>
<dbReference type="EMBL" id="L38615">
    <property type="protein sequence ID" value="AAA64618.1"/>
    <property type="molecule type" value="mRNA"/>
</dbReference>
<dbReference type="EMBL" id="BC078700">
    <property type="protein sequence ID" value="AAH78700.1"/>
    <property type="molecule type" value="mRNA"/>
</dbReference>
<dbReference type="PIR" id="I59346">
    <property type="entry name" value="I59346"/>
</dbReference>
<dbReference type="RefSeq" id="NP_037094.1">
    <property type="nucleotide sequence ID" value="NM_012962.1"/>
</dbReference>
<dbReference type="SMR" id="P46413"/>
<dbReference type="FunCoup" id="P46413">
    <property type="interactions" value="2825"/>
</dbReference>
<dbReference type="STRING" id="10116.ENSRNOP00000025657"/>
<dbReference type="iPTMnet" id="P46413"/>
<dbReference type="PhosphoSitePlus" id="P46413"/>
<dbReference type="jPOST" id="P46413"/>
<dbReference type="PaxDb" id="10116-ENSRNOP00000025657"/>
<dbReference type="Ensembl" id="ENSRNOT00000025657.3">
    <property type="protein sequence ID" value="ENSRNOP00000025657.2"/>
    <property type="gene ID" value="ENSRNOG00000018964.3"/>
</dbReference>
<dbReference type="GeneID" id="25458"/>
<dbReference type="KEGG" id="rno:25458"/>
<dbReference type="UCSC" id="RGD:2752">
    <property type="organism name" value="rat"/>
</dbReference>
<dbReference type="AGR" id="RGD:2752"/>
<dbReference type="CTD" id="2937"/>
<dbReference type="RGD" id="2752">
    <property type="gene designation" value="Gss"/>
</dbReference>
<dbReference type="eggNOG" id="KOG0021">
    <property type="taxonomic scope" value="Eukaryota"/>
</dbReference>
<dbReference type="GeneTree" id="ENSGT00390000013764"/>
<dbReference type="HOGENOM" id="CLU_025152_2_1_1"/>
<dbReference type="InParanoid" id="P46413"/>
<dbReference type="OrthoDB" id="27746at9989"/>
<dbReference type="PhylomeDB" id="P46413"/>
<dbReference type="TreeFam" id="TF105187"/>
<dbReference type="BRENDA" id="6.3.2.3">
    <property type="organism ID" value="5301"/>
</dbReference>
<dbReference type="Reactome" id="R-RNO-174403">
    <property type="pathway name" value="Glutathione synthesis and recycling"/>
</dbReference>
<dbReference type="UniPathway" id="UPA00142">
    <property type="reaction ID" value="UER00210"/>
</dbReference>
<dbReference type="PRO" id="PR:P46413"/>
<dbReference type="Proteomes" id="UP000002494">
    <property type="component" value="Chromosome 3"/>
</dbReference>
<dbReference type="Bgee" id="ENSRNOG00000018964">
    <property type="expression patterns" value="Expressed in kidney and 20 other cell types or tissues"/>
</dbReference>
<dbReference type="GO" id="GO:0005829">
    <property type="term" value="C:cytosol"/>
    <property type="evidence" value="ECO:0000318"/>
    <property type="project" value="GO_Central"/>
</dbReference>
<dbReference type="GO" id="GO:0005524">
    <property type="term" value="F:ATP binding"/>
    <property type="evidence" value="ECO:0000314"/>
    <property type="project" value="RGD"/>
</dbReference>
<dbReference type="GO" id="GO:0043295">
    <property type="term" value="F:glutathione binding"/>
    <property type="evidence" value="ECO:0000314"/>
    <property type="project" value="RGD"/>
</dbReference>
<dbReference type="GO" id="GO:0004363">
    <property type="term" value="F:glutathione synthase activity"/>
    <property type="evidence" value="ECO:0000314"/>
    <property type="project" value="RGD"/>
</dbReference>
<dbReference type="GO" id="GO:0016594">
    <property type="term" value="F:glycine binding"/>
    <property type="evidence" value="ECO:0000314"/>
    <property type="project" value="RGD"/>
</dbReference>
<dbReference type="GO" id="GO:0042802">
    <property type="term" value="F:identical protein binding"/>
    <property type="evidence" value="ECO:0000353"/>
    <property type="project" value="RGD"/>
</dbReference>
<dbReference type="GO" id="GO:0000287">
    <property type="term" value="F:magnesium ion binding"/>
    <property type="evidence" value="ECO:0000250"/>
    <property type="project" value="UniProtKB"/>
</dbReference>
<dbReference type="GO" id="GO:0042277">
    <property type="term" value="F:peptide binding"/>
    <property type="evidence" value="ECO:0000353"/>
    <property type="project" value="RGD"/>
</dbReference>
<dbReference type="GO" id="GO:0042803">
    <property type="term" value="F:protein homodimerization activity"/>
    <property type="evidence" value="ECO:0000250"/>
    <property type="project" value="UniProtKB"/>
</dbReference>
<dbReference type="GO" id="GO:0006750">
    <property type="term" value="P:glutathione biosynthetic process"/>
    <property type="evidence" value="ECO:0000314"/>
    <property type="project" value="RGD"/>
</dbReference>
<dbReference type="GO" id="GO:0043200">
    <property type="term" value="P:response to amino acid"/>
    <property type="evidence" value="ECO:0000270"/>
    <property type="project" value="RGD"/>
</dbReference>
<dbReference type="GO" id="GO:0046686">
    <property type="term" value="P:response to cadmium ion"/>
    <property type="evidence" value="ECO:0000266"/>
    <property type="project" value="RGD"/>
</dbReference>
<dbReference type="GO" id="GO:0031667">
    <property type="term" value="P:response to nutrient levels"/>
    <property type="evidence" value="ECO:0000270"/>
    <property type="project" value="RGD"/>
</dbReference>
<dbReference type="GO" id="GO:0034612">
    <property type="term" value="P:response to tumor necrosis factor"/>
    <property type="evidence" value="ECO:0000270"/>
    <property type="project" value="RGD"/>
</dbReference>
<dbReference type="GO" id="GO:0009410">
    <property type="term" value="P:response to xenobiotic stimulus"/>
    <property type="evidence" value="ECO:0000270"/>
    <property type="project" value="RGD"/>
</dbReference>
<dbReference type="CDD" id="cd00228">
    <property type="entry name" value="eu-GS"/>
    <property type="match status" value="1"/>
</dbReference>
<dbReference type="FunFam" id="3.30.1490.50:FF:000001">
    <property type="entry name" value="Glutathione synthetase"/>
    <property type="match status" value="1"/>
</dbReference>
<dbReference type="FunFam" id="3.40.50.1760:FF:000001">
    <property type="entry name" value="Glutathione synthetase"/>
    <property type="match status" value="1"/>
</dbReference>
<dbReference type="Gene3D" id="3.30.1490.50">
    <property type="match status" value="1"/>
</dbReference>
<dbReference type="Gene3D" id="3.30.1490.80">
    <property type="match status" value="1"/>
</dbReference>
<dbReference type="Gene3D" id="3.30.470.20">
    <property type="entry name" value="ATP-grasp fold, B domain"/>
    <property type="match status" value="1"/>
</dbReference>
<dbReference type="Gene3D" id="3.40.50.1760">
    <property type="entry name" value="Glutathione synthase, substrate-binding domain superfamily, eukaryotic"/>
    <property type="match status" value="1"/>
</dbReference>
<dbReference type="Gene3D" id="1.10.1080.10">
    <property type="entry name" value="Glutathione Synthetase, Chain A, domain 3"/>
    <property type="match status" value="1"/>
</dbReference>
<dbReference type="InterPro" id="IPR005615">
    <property type="entry name" value="Glutathione_synthase"/>
</dbReference>
<dbReference type="InterPro" id="IPR014042">
    <property type="entry name" value="Glutathione_synthase_a-hlx"/>
</dbReference>
<dbReference type="InterPro" id="IPR014709">
    <property type="entry name" value="Glutathione_synthase_C_euk"/>
</dbReference>
<dbReference type="InterPro" id="IPR014049">
    <property type="entry name" value="Glutathione_synthase_N_euk"/>
</dbReference>
<dbReference type="InterPro" id="IPR037013">
    <property type="entry name" value="GSH-S_sub-bd_sf"/>
</dbReference>
<dbReference type="InterPro" id="IPR004887">
    <property type="entry name" value="GSH_synth_subst-bd"/>
</dbReference>
<dbReference type="InterPro" id="IPR016185">
    <property type="entry name" value="PreATP-grasp_dom_sf"/>
</dbReference>
<dbReference type="NCBIfam" id="TIGR01986">
    <property type="entry name" value="glut_syn_euk"/>
    <property type="match status" value="1"/>
</dbReference>
<dbReference type="PANTHER" id="PTHR11130">
    <property type="entry name" value="GLUTATHIONE SYNTHETASE"/>
    <property type="match status" value="1"/>
</dbReference>
<dbReference type="PANTHER" id="PTHR11130:SF0">
    <property type="entry name" value="GLUTATHIONE SYNTHETASE"/>
    <property type="match status" value="1"/>
</dbReference>
<dbReference type="Pfam" id="PF03917">
    <property type="entry name" value="GSH_synth_ATP"/>
    <property type="match status" value="1"/>
</dbReference>
<dbReference type="Pfam" id="PF03199">
    <property type="entry name" value="GSH_synthase"/>
    <property type="match status" value="1"/>
</dbReference>
<dbReference type="PIRSF" id="PIRSF001558">
    <property type="entry name" value="GSHase"/>
    <property type="match status" value="1"/>
</dbReference>
<dbReference type="SUPFAM" id="SSF56059">
    <property type="entry name" value="Glutathione synthetase ATP-binding domain-like"/>
    <property type="match status" value="1"/>
</dbReference>
<dbReference type="SUPFAM" id="SSF52440">
    <property type="entry name" value="PreATP-grasp domain"/>
    <property type="match status" value="1"/>
</dbReference>
<feature type="initiator methionine" description="Removed" evidence="2">
    <location>
        <position position="1"/>
    </location>
</feature>
<feature type="chain" id="PRO_0000211263" description="Glutathione synthetase">
    <location>
        <begin position="2"/>
        <end position="474"/>
    </location>
</feature>
<feature type="binding site" evidence="1">
    <location>
        <position position="125"/>
    </location>
    <ligand>
        <name>substrate</name>
    </ligand>
</feature>
<feature type="binding site" evidence="1">
    <location>
        <position position="144"/>
    </location>
    <ligand>
        <name>ATP</name>
        <dbReference type="ChEBI" id="CHEBI:30616"/>
    </ligand>
</feature>
<feature type="binding site" evidence="1">
    <location>
        <position position="144"/>
    </location>
    <ligand>
        <name>Mg(2+)</name>
        <dbReference type="ChEBI" id="CHEBI:18420"/>
    </ligand>
</feature>
<feature type="binding site" evidence="1">
    <location>
        <position position="146"/>
    </location>
    <ligand>
        <name>Mg(2+)</name>
        <dbReference type="ChEBI" id="CHEBI:18420"/>
    </ligand>
</feature>
<feature type="binding site" evidence="1">
    <location>
        <begin position="148"/>
        <end position="151"/>
    </location>
    <ligand>
        <name>substrate</name>
    </ligand>
</feature>
<feature type="binding site" evidence="1">
    <location>
        <begin position="214"/>
        <end position="216"/>
    </location>
    <ligand>
        <name>substrate</name>
    </ligand>
</feature>
<feature type="binding site" evidence="1">
    <location>
        <position position="220"/>
    </location>
    <ligand>
        <name>substrate</name>
    </ligand>
</feature>
<feature type="binding site" evidence="1">
    <location>
        <begin position="267"/>
        <end position="270"/>
    </location>
    <ligand>
        <name>substrate</name>
    </ligand>
</feature>
<feature type="binding site" evidence="1">
    <location>
        <position position="305"/>
    </location>
    <ligand>
        <name>ATP</name>
        <dbReference type="ChEBI" id="CHEBI:30616"/>
    </ligand>
</feature>
<feature type="binding site" evidence="1">
    <location>
        <begin position="364"/>
        <end position="373"/>
    </location>
    <ligand>
        <name>ATP</name>
        <dbReference type="ChEBI" id="CHEBI:30616"/>
    </ligand>
</feature>
<feature type="binding site" evidence="1">
    <location>
        <position position="368"/>
    </location>
    <ligand>
        <name>Mg(2+)</name>
        <dbReference type="ChEBI" id="CHEBI:18420"/>
    </ligand>
</feature>
<feature type="binding site" evidence="1">
    <location>
        <position position="375"/>
    </location>
    <ligand>
        <name>ATP</name>
        <dbReference type="ChEBI" id="CHEBI:30616"/>
    </ligand>
</feature>
<feature type="binding site" evidence="1">
    <location>
        <begin position="398"/>
        <end position="401"/>
    </location>
    <ligand>
        <name>ATP</name>
        <dbReference type="ChEBI" id="CHEBI:30616"/>
    </ligand>
</feature>
<feature type="binding site" evidence="1">
    <location>
        <position position="425"/>
    </location>
    <ligand>
        <name>ATP</name>
        <dbReference type="ChEBI" id="CHEBI:30616"/>
    </ligand>
</feature>
<feature type="binding site" evidence="1">
    <location>
        <position position="450"/>
    </location>
    <ligand>
        <name>substrate</name>
    </ligand>
</feature>
<feature type="binding site" evidence="1">
    <location>
        <position position="452"/>
    </location>
    <ligand>
        <name>ATP</name>
        <dbReference type="ChEBI" id="CHEBI:30616"/>
    </ligand>
</feature>
<feature type="binding site" evidence="1">
    <location>
        <position position="458"/>
    </location>
    <ligand>
        <name>ATP</name>
        <dbReference type="ChEBI" id="CHEBI:30616"/>
    </ligand>
</feature>
<feature type="binding site" evidence="1">
    <location>
        <begin position="461"/>
        <end position="462"/>
    </location>
    <ligand>
        <name>substrate</name>
    </ligand>
</feature>
<feature type="modified residue" description="N-acetylalanine" evidence="2">
    <location>
        <position position="2"/>
    </location>
</feature>
<feature type="modified residue" description="Phosphoserine" evidence="2">
    <location>
        <position position="415"/>
    </location>
</feature>